<comment type="function">
    <text evidence="1">Catalyzes the phosphorylation of pantothenate (Pan), the first step in CoA biosynthesis.</text>
</comment>
<comment type="catalytic activity">
    <reaction evidence="1">
        <text>(R)-pantothenate + ATP = (R)-4'-phosphopantothenate + ADP + H(+)</text>
        <dbReference type="Rhea" id="RHEA:16373"/>
        <dbReference type="ChEBI" id="CHEBI:10986"/>
        <dbReference type="ChEBI" id="CHEBI:15378"/>
        <dbReference type="ChEBI" id="CHEBI:29032"/>
        <dbReference type="ChEBI" id="CHEBI:30616"/>
        <dbReference type="ChEBI" id="CHEBI:456216"/>
        <dbReference type="EC" id="2.7.1.33"/>
    </reaction>
</comment>
<comment type="pathway">
    <text evidence="1">Cofactor biosynthesis; coenzyme A biosynthesis; CoA from (R)-pantothenate: step 1/5.</text>
</comment>
<comment type="subunit">
    <text evidence="1">Homodimer.</text>
</comment>
<comment type="subcellular location">
    <subcellularLocation>
        <location evidence="1">Cytoplasm</location>
    </subcellularLocation>
</comment>
<comment type="similarity">
    <text evidence="1">Belongs to the type II pantothenate kinase family.</text>
</comment>
<accession>Q6GEU5</accession>
<organism>
    <name type="scientific">Staphylococcus aureus (strain MRSA252)</name>
    <dbReference type="NCBI Taxonomy" id="282458"/>
    <lineage>
        <taxon>Bacteria</taxon>
        <taxon>Bacillati</taxon>
        <taxon>Bacillota</taxon>
        <taxon>Bacilli</taxon>
        <taxon>Bacillales</taxon>
        <taxon>Staphylococcaceae</taxon>
        <taxon>Staphylococcus</taxon>
    </lineage>
</organism>
<gene>
    <name evidence="1" type="primary">coaW</name>
    <name type="ordered locus">SAR2218</name>
</gene>
<dbReference type="EC" id="2.7.1.33" evidence="1"/>
<dbReference type="EMBL" id="BX571856">
    <property type="protein sequence ID" value="CAG41199.1"/>
    <property type="molecule type" value="Genomic_DNA"/>
</dbReference>
<dbReference type="RefSeq" id="WP_000862728.1">
    <property type="nucleotide sequence ID" value="NC_002952.2"/>
</dbReference>
<dbReference type="SMR" id="Q6GEU5"/>
<dbReference type="KEGG" id="sar:SAR2218"/>
<dbReference type="HOGENOM" id="CLU_087521_1_0_9"/>
<dbReference type="UniPathway" id="UPA00241">
    <property type="reaction ID" value="UER00352"/>
</dbReference>
<dbReference type="Proteomes" id="UP000000596">
    <property type="component" value="Chromosome"/>
</dbReference>
<dbReference type="GO" id="GO:0005829">
    <property type="term" value="C:cytosol"/>
    <property type="evidence" value="ECO:0007669"/>
    <property type="project" value="TreeGrafter"/>
</dbReference>
<dbReference type="GO" id="GO:0005524">
    <property type="term" value="F:ATP binding"/>
    <property type="evidence" value="ECO:0007669"/>
    <property type="project" value="UniProtKB-UniRule"/>
</dbReference>
<dbReference type="GO" id="GO:0004594">
    <property type="term" value="F:pantothenate kinase activity"/>
    <property type="evidence" value="ECO:0007669"/>
    <property type="project" value="UniProtKB-UniRule"/>
</dbReference>
<dbReference type="GO" id="GO:0015937">
    <property type="term" value="P:coenzyme A biosynthetic process"/>
    <property type="evidence" value="ECO:0007669"/>
    <property type="project" value="UniProtKB-UniRule"/>
</dbReference>
<dbReference type="Gene3D" id="3.30.420.40">
    <property type="match status" value="1"/>
</dbReference>
<dbReference type="HAMAP" id="MF_01273">
    <property type="entry name" value="Pantothen_kinase_2"/>
    <property type="match status" value="1"/>
</dbReference>
<dbReference type="InterPro" id="IPR043129">
    <property type="entry name" value="ATPase_NBD"/>
</dbReference>
<dbReference type="InterPro" id="IPR004567">
    <property type="entry name" value="Type_II_PanK"/>
</dbReference>
<dbReference type="InterPro" id="IPR011602">
    <property type="entry name" value="Type_II_PanK_bac"/>
</dbReference>
<dbReference type="NCBIfam" id="TIGR00555">
    <property type="entry name" value="panK_eukar"/>
    <property type="match status" value="1"/>
</dbReference>
<dbReference type="NCBIfam" id="NF009842">
    <property type="entry name" value="PRK13317.1"/>
    <property type="match status" value="1"/>
</dbReference>
<dbReference type="PANTHER" id="PTHR12280:SF20">
    <property type="entry name" value="4'-PHOSPHOPANTETHEINE PHOSPHATASE"/>
    <property type="match status" value="1"/>
</dbReference>
<dbReference type="PANTHER" id="PTHR12280">
    <property type="entry name" value="PANTOTHENATE KINASE"/>
    <property type="match status" value="1"/>
</dbReference>
<dbReference type="Pfam" id="PF03630">
    <property type="entry name" value="Fumble"/>
    <property type="match status" value="1"/>
</dbReference>
<dbReference type="PIRSF" id="PIRSF036940">
    <property type="entry name" value="PanK_bac_aCoA"/>
    <property type="match status" value="1"/>
</dbReference>
<dbReference type="SUPFAM" id="SSF53067">
    <property type="entry name" value="Actin-like ATPase domain"/>
    <property type="match status" value="1"/>
</dbReference>
<feature type="chain" id="PRO_0000261345" description="Type II pantothenate kinase">
    <location>
        <begin position="1"/>
        <end position="267"/>
    </location>
</feature>
<feature type="active site" description="Proton acceptor" evidence="1">
    <location>
        <position position="70"/>
    </location>
</feature>
<feature type="binding site" evidence="1">
    <location>
        <begin position="6"/>
        <end position="13"/>
    </location>
    <ligand>
        <name>ATP</name>
        <dbReference type="ChEBI" id="CHEBI:30616"/>
    </ligand>
</feature>
<feature type="binding site" evidence="1">
    <location>
        <position position="99"/>
    </location>
    <ligand>
        <name>ATP</name>
        <dbReference type="ChEBI" id="CHEBI:30616"/>
    </ligand>
</feature>
<feature type="binding site" evidence="1">
    <location>
        <begin position="121"/>
        <end position="125"/>
    </location>
    <ligand>
        <name>ATP</name>
        <dbReference type="ChEBI" id="CHEBI:30616"/>
    </ligand>
</feature>
<feature type="binding site" evidence="1">
    <location>
        <position position="137"/>
    </location>
    <ligand>
        <name>ATP</name>
        <dbReference type="ChEBI" id="CHEBI:30616"/>
    </ligand>
</feature>
<feature type="binding site" evidence="1">
    <location>
        <position position="225"/>
    </location>
    <ligand>
        <name>ATP</name>
        <dbReference type="ChEBI" id="CHEBI:30616"/>
    </ligand>
</feature>
<evidence type="ECO:0000255" key="1">
    <source>
        <dbReference type="HAMAP-Rule" id="MF_01273"/>
    </source>
</evidence>
<name>COAW_STAAR</name>
<protein>
    <recommendedName>
        <fullName evidence="1">Type II pantothenate kinase</fullName>
        <ecNumber evidence="1">2.7.1.33</ecNumber>
    </recommendedName>
    <alternativeName>
        <fullName evidence="1">PanK-II</fullName>
    </alternativeName>
    <alternativeName>
        <fullName evidence="1">Pantothenic acid kinase</fullName>
    </alternativeName>
</protein>
<reference key="1">
    <citation type="journal article" date="2004" name="Proc. Natl. Acad. Sci. U.S.A.">
        <title>Complete genomes of two clinical Staphylococcus aureus strains: evidence for the rapid evolution of virulence and drug resistance.</title>
        <authorList>
            <person name="Holden M.T.G."/>
            <person name="Feil E.J."/>
            <person name="Lindsay J.A."/>
            <person name="Peacock S.J."/>
            <person name="Day N.P.J."/>
            <person name="Enright M.C."/>
            <person name="Foster T.J."/>
            <person name="Moore C.E."/>
            <person name="Hurst L."/>
            <person name="Atkin R."/>
            <person name="Barron A."/>
            <person name="Bason N."/>
            <person name="Bentley S.D."/>
            <person name="Chillingworth C."/>
            <person name="Chillingworth T."/>
            <person name="Churcher C."/>
            <person name="Clark L."/>
            <person name="Corton C."/>
            <person name="Cronin A."/>
            <person name="Doggett J."/>
            <person name="Dowd L."/>
            <person name="Feltwell T."/>
            <person name="Hance Z."/>
            <person name="Harris B."/>
            <person name="Hauser H."/>
            <person name="Holroyd S."/>
            <person name="Jagels K."/>
            <person name="James K.D."/>
            <person name="Lennard N."/>
            <person name="Line A."/>
            <person name="Mayes R."/>
            <person name="Moule S."/>
            <person name="Mungall K."/>
            <person name="Ormond D."/>
            <person name="Quail M.A."/>
            <person name="Rabbinowitsch E."/>
            <person name="Rutherford K.M."/>
            <person name="Sanders M."/>
            <person name="Sharp S."/>
            <person name="Simmonds M."/>
            <person name="Stevens K."/>
            <person name="Whitehead S."/>
            <person name="Barrell B.G."/>
            <person name="Spratt B.G."/>
            <person name="Parkhill J."/>
        </authorList>
    </citation>
    <scope>NUCLEOTIDE SEQUENCE [LARGE SCALE GENOMIC DNA]</scope>
    <source>
        <strain>MRSA252</strain>
    </source>
</reference>
<proteinExistence type="inferred from homology"/>
<keyword id="KW-0067">ATP-binding</keyword>
<keyword id="KW-0173">Coenzyme A biosynthesis</keyword>
<keyword id="KW-0963">Cytoplasm</keyword>
<keyword id="KW-0418">Kinase</keyword>
<keyword id="KW-0547">Nucleotide-binding</keyword>
<keyword id="KW-0808">Transferase</keyword>
<sequence>MKVGIDAGGTLIKIVQEQDNQRTFKTELTKNIDQVVEWLNQQQIEKLCLTGGNAGVIAENINIPAQIFVEFDAASQGLGILLKEQGHDLADYIFANVGTGTSLHYFDGQSQRRVGGIGTGGGMIQGLGYLLSQITDYKQLTDMAQHGDRNTIDLKVRHIYKDTEPPIPGDLTAANFGHVLHHLDADFTPSNKLAAVIGVVGEVVTTMAITVAREFKTENIVYIGSSFHNNALLRKVVEDYTVLRGCKPYYVENGAFSGAIGALYLGK</sequence>